<protein>
    <recommendedName>
        <fullName evidence="6">C-reactive protein</fullName>
        <shortName evidence="6">Dare-CRP</shortName>
    </recommendedName>
    <alternativeName>
        <fullName evidence="7">Short-chain pentraxin</fullName>
        <shortName evidence="7">Dare-PTX</shortName>
    </alternativeName>
</protein>
<sequence>MLVVFLCLLSVTLEATEGFKNLSGKVLQFKTATDNSYVKLYPEKPLSLSAFTLCMRVATELPLDREVILFAYYTPDVDELNVWRERDGRVSLYIQSSKDAAFFRLPPLSTLQTHLCVAWESATGLTAFWMDGRRSLHQVYRKGYSIRSGGTVVLGQDPDSYVGSFDVDQSFVGEIANLQMWDYVLSSAQIKAVYYNQDNRVKGNVFDWDTIEYDVTGNVLVATDN</sequence>
<name>CRP_DANRE</name>
<gene>
    <name evidence="12" type="primary">crp</name>
</gene>
<reference evidence="10" key="1">
    <citation type="journal article" date="2011" name="Acta Crystallogr. F">
        <title>Expression, crystallization and preliminary crystallographic analysis of C-reactive protein from zebrafish.</title>
        <authorList>
            <person name="Chen R."/>
            <person name="Qi J."/>
            <person name="Yao S."/>
            <person name="Pan X."/>
            <person name="Gao F."/>
            <person name="Xia C."/>
        </authorList>
    </citation>
    <scope>NUCLEOTIDE SEQUENCE [MRNA]</scope>
    <scope>CRYSTALLIZATION</scope>
</reference>
<reference evidence="11" key="2">
    <citation type="submission" date="2012-12" db="EMBL/GenBank/DDBJ databases">
        <authorList>
            <person name="Chen R."/>
            <person name="Yao G.S."/>
            <person name="Sun P.Y."/>
            <person name="Xia C."/>
        </authorList>
    </citation>
    <scope>NUCLEOTIDE SEQUENCE [MRNA]</scope>
</reference>
<reference evidence="9" key="3">
    <citation type="submission" date="2006-08" db="EMBL/GenBank/DDBJ databases">
        <authorList>
            <consortium name="NIH - Zebrafish Gene Collection (ZGC) project"/>
        </authorList>
    </citation>
    <scope>NUCLEOTIDE SEQUENCE [LARGE SCALE MRNA]</scope>
    <source>
        <strain evidence="9">AB</strain>
        <tissue evidence="9">Liver</tissue>
    </source>
</reference>
<reference evidence="13 14" key="4">
    <citation type="journal article" date="2015" name="J. Struct. Biol.">
        <title>Crystal structures for short-chain pentraxin from zebrafish demonstrate a cyclic trimer with new recognition and effector faces.</title>
        <authorList>
            <person name="Chen R."/>
            <person name="Qi J."/>
            <person name="Yuan H."/>
            <person name="Wu Y."/>
            <person name="Hu W."/>
            <person name="Xia C."/>
        </authorList>
    </citation>
    <scope>X-RAY CRYSTALLOGRAPHY (1.65 ANGSTROMS) OF 19-225 IN COMPLEX WITH CALCIUM</scope>
    <scope>COFACTOR</scope>
    <scope>SUBUNIT</scope>
    <scope>DISULFIDE BOND</scope>
</reference>
<feature type="signal peptide" evidence="2">
    <location>
        <begin position="1"/>
        <end position="18"/>
    </location>
</feature>
<feature type="chain" id="PRO_5006991604" description="C-reactive protein" evidence="2">
    <location>
        <begin position="19"/>
        <end position="225"/>
    </location>
</feature>
<feature type="domain" description="Pentraxin (PTX)" evidence="3">
    <location>
        <begin position="23"/>
        <end position="225"/>
    </location>
</feature>
<feature type="binding site" evidence="5 14">
    <location>
        <position position="78"/>
    </location>
    <ligand>
        <name>Ca(2+)</name>
        <dbReference type="ChEBI" id="CHEBI:29108"/>
        <label>1</label>
    </ligand>
</feature>
<feature type="binding site" evidence="5 14">
    <location>
        <position position="157"/>
    </location>
    <ligand>
        <name>Ca(2+)</name>
        <dbReference type="ChEBI" id="CHEBI:29108"/>
        <label>1</label>
    </ligand>
</feature>
<feature type="binding site" evidence="5 14">
    <location>
        <position position="157"/>
    </location>
    <ligand>
        <name>Ca(2+)</name>
        <dbReference type="ChEBI" id="CHEBI:29108"/>
        <label>2</label>
    </ligand>
</feature>
<feature type="binding site" evidence="5 14">
    <location>
        <position position="158"/>
    </location>
    <ligand>
        <name>Ca(2+)</name>
        <dbReference type="ChEBI" id="CHEBI:29108"/>
        <label>1</label>
    </ligand>
</feature>
<feature type="binding site" evidence="5 14">
    <location>
        <position position="159"/>
    </location>
    <ligand>
        <name>Ca(2+)</name>
        <dbReference type="ChEBI" id="CHEBI:29108"/>
        <label>1</label>
    </ligand>
</feature>
<feature type="binding site" evidence="5 14">
    <location>
        <position position="159"/>
    </location>
    <ligand>
        <name>Ca(2+)</name>
        <dbReference type="ChEBI" id="CHEBI:29108"/>
        <label>2</label>
    </ligand>
</feature>
<feature type="binding site" evidence="5 14">
    <location>
        <position position="169"/>
    </location>
    <ligand>
        <name>Ca(2+)</name>
        <dbReference type="ChEBI" id="CHEBI:29108"/>
        <label>2</label>
    </ligand>
</feature>
<feature type="disulfide bond" evidence="5 13 14">
    <location>
        <begin position="54"/>
        <end position="116"/>
    </location>
</feature>
<feature type="sequence conflict" description="In Ref. 1; AET80950." evidence="8" ref="1">
    <original>MLVVFL</original>
    <variation>MLLFF</variation>
    <location>
        <begin position="1"/>
        <end position="6"/>
    </location>
</feature>
<feature type="sequence conflict" description="In Ref. 3; AAH95616." evidence="8" ref="3">
    <original>TEG</original>
    <variation>ESC</variation>
    <location>
        <begin position="16"/>
        <end position="18"/>
    </location>
</feature>
<feature type="sequence conflict" description="In Ref. 3; AAH81513." evidence="8" ref="3">
    <original>E</original>
    <variation>G</variation>
    <location>
        <position position="66"/>
    </location>
</feature>
<feature type="sequence conflict" description="In Ref. 2; AGB69039." evidence="8" ref="2">
    <original>LVATDN</original>
    <variation>PVAPDI</variation>
    <location>
        <begin position="220"/>
        <end position="225"/>
    </location>
</feature>
<feature type="sequence conflict" description="In Ref. 1; AET80950." evidence="8" ref="1">
    <original>AT</original>
    <variation>VP</variation>
    <location>
        <begin position="222"/>
        <end position="223"/>
    </location>
</feature>
<feature type="strand" evidence="16">
    <location>
        <begin position="25"/>
        <end position="29"/>
    </location>
</feature>
<feature type="strand" evidence="16">
    <location>
        <begin position="37"/>
        <end position="41"/>
    </location>
</feature>
<feature type="strand" evidence="16">
    <location>
        <begin position="48"/>
        <end position="58"/>
    </location>
</feature>
<feature type="strand" evidence="16">
    <location>
        <begin position="67"/>
        <end position="74"/>
    </location>
</feature>
<feature type="strand" evidence="16">
    <location>
        <begin position="77"/>
        <end position="84"/>
    </location>
</feature>
<feature type="strand" evidence="16">
    <location>
        <begin position="90"/>
        <end position="95"/>
    </location>
</feature>
<feature type="strand" evidence="16">
    <location>
        <begin position="101"/>
        <end position="103"/>
    </location>
</feature>
<feature type="strand" evidence="16">
    <location>
        <begin position="113"/>
        <end position="120"/>
    </location>
</feature>
<feature type="turn" evidence="16">
    <location>
        <begin position="121"/>
        <end position="123"/>
    </location>
</feature>
<feature type="strand" evidence="16">
    <location>
        <begin position="125"/>
        <end position="130"/>
    </location>
</feature>
<feature type="strand" evidence="16">
    <location>
        <begin position="151"/>
        <end position="156"/>
    </location>
</feature>
<feature type="helix" evidence="15">
    <location>
        <begin position="158"/>
        <end position="160"/>
    </location>
</feature>
<feature type="strand" evidence="15">
    <location>
        <begin position="162"/>
        <end position="164"/>
    </location>
</feature>
<feature type="helix" evidence="16">
    <location>
        <begin position="167"/>
        <end position="169"/>
    </location>
</feature>
<feature type="strand" evidence="16">
    <location>
        <begin position="173"/>
        <end position="183"/>
    </location>
</feature>
<feature type="helix" evidence="16">
    <location>
        <begin position="187"/>
        <end position="194"/>
    </location>
</feature>
<feature type="strand" evidence="16">
    <location>
        <begin position="204"/>
        <end position="207"/>
    </location>
</feature>
<feature type="turn" evidence="16">
    <location>
        <begin position="208"/>
        <end position="210"/>
    </location>
</feature>
<feature type="strand" evidence="16">
    <location>
        <begin position="212"/>
        <end position="223"/>
    </location>
</feature>
<accession>Q0IIP8</accession>
<accession>G9D324</accession>
<accession>L7QIH6</accession>
<accession>Q502P4</accession>
<accession>Q66I62</accession>
<organism evidence="10">
    <name type="scientific">Danio rerio</name>
    <name type="common">Zebrafish</name>
    <name type="synonym">Brachydanio rerio</name>
    <dbReference type="NCBI Taxonomy" id="7955"/>
    <lineage>
        <taxon>Eukaryota</taxon>
        <taxon>Metazoa</taxon>
        <taxon>Chordata</taxon>
        <taxon>Craniata</taxon>
        <taxon>Vertebrata</taxon>
        <taxon>Euteleostomi</taxon>
        <taxon>Actinopterygii</taxon>
        <taxon>Neopterygii</taxon>
        <taxon>Teleostei</taxon>
        <taxon>Ostariophysi</taxon>
        <taxon>Cypriniformes</taxon>
        <taxon>Danionidae</taxon>
        <taxon>Danioninae</taxon>
        <taxon>Danio</taxon>
    </lineage>
</organism>
<comment type="function">
    <text evidence="1">Displays several functions associated with host defense: it promotes agglutination, bacterial capsular swelling, phagocytosis, and complement fixation through its calcium-dependent binding to phosphorylcholine.</text>
</comment>
<comment type="cofactor">
    <cofactor evidence="4 5">
        <name>Ca(2+)</name>
        <dbReference type="ChEBI" id="CHEBI:29108"/>
    </cofactor>
    <text evidence="4 5">Binds 2 calcium ions per subunit.</text>
</comment>
<comment type="subunit">
    <text evidence="5">Homotrimer.</text>
</comment>
<comment type="subcellular location">
    <subcellularLocation>
        <location evidence="4">Secreted</location>
    </subcellularLocation>
</comment>
<comment type="similarity">
    <text evidence="4">Belongs to the pentraxin family.</text>
</comment>
<comment type="sequence caution" evidence="8">
    <conflict type="erroneous initiation">
        <sequence resource="EMBL-CDS" id="AAH81513"/>
    </conflict>
    <text>Extended N-terminus.</text>
</comment>
<comment type="sequence caution" evidence="8">
    <conflict type="erroneous initiation">
        <sequence resource="EMBL-CDS" id="AGB69039"/>
    </conflict>
    <text>Extended N-terminus.</text>
</comment>
<keyword id="KW-0002">3D-structure</keyword>
<keyword id="KW-0011">Acute phase</keyword>
<keyword id="KW-0106">Calcium</keyword>
<keyword id="KW-1015">Disulfide bond</keyword>
<keyword id="KW-0479">Metal-binding</keyword>
<keyword id="KW-1185">Reference proteome</keyword>
<keyword id="KW-0964">Secreted</keyword>
<keyword id="KW-0732">Signal</keyword>
<dbReference type="EMBL" id="JF772178">
    <property type="protein sequence ID" value="AET80950.1"/>
    <property type="molecule type" value="mRNA"/>
</dbReference>
<dbReference type="EMBL" id="KC416628">
    <property type="protein sequence ID" value="AGB69039.1"/>
    <property type="status" value="ALT_INIT"/>
    <property type="molecule type" value="mRNA"/>
</dbReference>
<dbReference type="EMBL" id="BC081513">
    <property type="protein sequence ID" value="AAH81513.1"/>
    <property type="status" value="ALT_INIT"/>
    <property type="molecule type" value="mRNA"/>
</dbReference>
<dbReference type="EMBL" id="BC095616">
    <property type="protein sequence ID" value="AAH95616.1"/>
    <property type="molecule type" value="mRNA"/>
</dbReference>
<dbReference type="EMBL" id="BC121777">
    <property type="protein sequence ID" value="AAI21778.1"/>
    <property type="molecule type" value="mRNA"/>
</dbReference>
<dbReference type="EMBL" id="BC164323">
    <property type="protein sequence ID" value="AAI64323.1"/>
    <property type="molecule type" value="mRNA"/>
</dbReference>
<dbReference type="RefSeq" id="NP_001039325.1">
    <property type="nucleotide sequence ID" value="NM_001045860.1"/>
</dbReference>
<dbReference type="PDB" id="4PBO">
    <property type="method" value="X-ray"/>
    <property type="resolution" value="1.70 A"/>
    <property type="chains" value="A=19-225"/>
</dbReference>
<dbReference type="PDB" id="4PBP">
    <property type="method" value="X-ray"/>
    <property type="resolution" value="1.65 A"/>
    <property type="chains" value="A/B/C=19-225"/>
</dbReference>
<dbReference type="PDBsum" id="4PBO"/>
<dbReference type="PDBsum" id="4PBP"/>
<dbReference type="SMR" id="Q0IIP8"/>
<dbReference type="AGR" id="ZFIN:ZDB-GENE-060901-6"/>
<dbReference type="ZFIN" id="ZDB-GENE-060901-6">
    <property type="gene designation" value="crp5"/>
</dbReference>
<dbReference type="EvolutionaryTrace" id="Q0IIP8"/>
<dbReference type="PRO" id="PR:Q0IIP8"/>
<dbReference type="Proteomes" id="UP000000437">
    <property type="component" value="Unplaced"/>
</dbReference>
<dbReference type="GO" id="GO:0005576">
    <property type="term" value="C:extracellular region"/>
    <property type="evidence" value="ECO:0007669"/>
    <property type="project" value="UniProtKB-SubCell"/>
</dbReference>
<dbReference type="GO" id="GO:0015485">
    <property type="term" value="F:cholesterol binding"/>
    <property type="evidence" value="ECO:0000314"/>
    <property type="project" value="ZFIN"/>
</dbReference>
<dbReference type="GO" id="GO:0046872">
    <property type="term" value="F:metal ion binding"/>
    <property type="evidence" value="ECO:0007669"/>
    <property type="project" value="UniProtKB-KW"/>
</dbReference>
<dbReference type="GO" id="GO:0006953">
    <property type="term" value="P:acute-phase response"/>
    <property type="evidence" value="ECO:0007669"/>
    <property type="project" value="UniProtKB-KW"/>
</dbReference>
<dbReference type="GO" id="GO:0051607">
    <property type="term" value="P:defense response to virus"/>
    <property type="evidence" value="ECO:0000314"/>
    <property type="project" value="ZFIN"/>
</dbReference>
<dbReference type="CDD" id="cd00152">
    <property type="entry name" value="PTX"/>
    <property type="match status" value="1"/>
</dbReference>
<dbReference type="Gene3D" id="2.60.120.200">
    <property type="match status" value="1"/>
</dbReference>
<dbReference type="InterPro" id="IPR013320">
    <property type="entry name" value="ConA-like_dom_sf"/>
</dbReference>
<dbReference type="InterPro" id="IPR001759">
    <property type="entry name" value="Pentraxin-related"/>
</dbReference>
<dbReference type="InterPro" id="IPR051005">
    <property type="entry name" value="Pentraxin_domain"/>
</dbReference>
<dbReference type="PANTHER" id="PTHR45869">
    <property type="entry name" value="C-REACTIVE PROTEIN-RELATED"/>
    <property type="match status" value="1"/>
</dbReference>
<dbReference type="PANTHER" id="PTHR45869:SF2">
    <property type="entry name" value="C-REACTIVE PROTEIN-RELATED"/>
    <property type="match status" value="1"/>
</dbReference>
<dbReference type="Pfam" id="PF00354">
    <property type="entry name" value="Pentaxin"/>
    <property type="match status" value="1"/>
</dbReference>
<dbReference type="PRINTS" id="PR00895">
    <property type="entry name" value="PENTAXIN"/>
</dbReference>
<dbReference type="SMART" id="SM00159">
    <property type="entry name" value="PTX"/>
    <property type="match status" value="1"/>
</dbReference>
<dbReference type="SUPFAM" id="SSF49899">
    <property type="entry name" value="Concanavalin A-like lectins/glucanases"/>
    <property type="match status" value="1"/>
</dbReference>
<dbReference type="PROSITE" id="PS51828">
    <property type="entry name" value="PTX_2"/>
    <property type="match status" value="1"/>
</dbReference>
<evidence type="ECO:0000250" key="1">
    <source>
        <dbReference type="UniProtKB" id="P19094"/>
    </source>
</evidence>
<evidence type="ECO:0000255" key="2"/>
<evidence type="ECO:0000255" key="3">
    <source>
        <dbReference type="PROSITE-ProRule" id="PRU01172"/>
    </source>
</evidence>
<evidence type="ECO:0000255" key="4">
    <source>
        <dbReference type="RuleBase" id="RU362112"/>
    </source>
</evidence>
<evidence type="ECO:0000269" key="5">
    <source>
    </source>
</evidence>
<evidence type="ECO:0000303" key="6">
    <source>
    </source>
</evidence>
<evidence type="ECO:0000303" key="7">
    <source>
    </source>
</evidence>
<evidence type="ECO:0000305" key="8"/>
<evidence type="ECO:0000312" key="9">
    <source>
        <dbReference type="EMBL" id="AAI21778.1"/>
    </source>
</evidence>
<evidence type="ECO:0000312" key="10">
    <source>
        <dbReference type="EMBL" id="AET80950.1"/>
    </source>
</evidence>
<evidence type="ECO:0000312" key="11">
    <source>
        <dbReference type="EMBL" id="AGB69039.1"/>
    </source>
</evidence>
<evidence type="ECO:0000312" key="12">
    <source>
        <dbReference type="ZFIN" id="ZDB-GENE-060901-6"/>
    </source>
</evidence>
<evidence type="ECO:0007744" key="13">
    <source>
        <dbReference type="PDB" id="4PBO"/>
    </source>
</evidence>
<evidence type="ECO:0007744" key="14">
    <source>
        <dbReference type="PDB" id="4PBP"/>
    </source>
</evidence>
<evidence type="ECO:0007829" key="15">
    <source>
        <dbReference type="PDB" id="4PBO"/>
    </source>
</evidence>
<evidence type="ECO:0007829" key="16">
    <source>
        <dbReference type="PDB" id="4PBP"/>
    </source>
</evidence>
<proteinExistence type="evidence at protein level"/>